<accession>Q1GZA7</accession>
<proteinExistence type="inferred from homology"/>
<sequence length="396" mass="42688">MLESHPAEAATPLLDALQAELADRARLGLLRQRRVLHGMQGVYVEIEGKRLLSFCSNDYLGLASHPSLISAMRDCAVTTGAGTGASHLVSGHQQAHEALEHALQTFMGLPGVLLFTTGYMANLGIITALCGRQDAIFADKLNHASLNDAALLSRAELKRYAHNDLTGLERLLAQSQARRKLVVADAVFSMDGDLAPVPALLSLCERYDAYLMLDDAHGFGVLGAHGRGVLEHFGLDSPRIIYMATLGKAAGAAGAFVAGPTILTEYLMQTARPYIYTTASPAPVAAAAMAGVQLIEHDHARRAHLRALIADFRASCRLQRWQLMASETAIQPVVIGSNEEAVQVSKRLLEHGVLVPAIRPPTVPRGTARLRISLSAAHTHEDVQRLLDILHRLEEA</sequence>
<organism>
    <name type="scientific">Methylobacillus flagellatus (strain ATCC 51484 / DSM 6875 / VKM B-1610 / KT)</name>
    <dbReference type="NCBI Taxonomy" id="265072"/>
    <lineage>
        <taxon>Bacteria</taxon>
        <taxon>Pseudomonadati</taxon>
        <taxon>Pseudomonadota</taxon>
        <taxon>Betaproteobacteria</taxon>
        <taxon>Nitrosomonadales</taxon>
        <taxon>Methylophilaceae</taxon>
        <taxon>Methylobacillus</taxon>
    </lineage>
</organism>
<feature type="chain" id="PRO_0000381024" description="8-amino-7-oxononanoate synthase">
    <location>
        <begin position="1"/>
        <end position="396"/>
    </location>
</feature>
<feature type="binding site" evidence="1">
    <location>
        <position position="31"/>
    </location>
    <ligand>
        <name>substrate</name>
    </ligand>
</feature>
<feature type="binding site" evidence="1">
    <location>
        <begin position="118"/>
        <end position="119"/>
    </location>
    <ligand>
        <name>pyridoxal 5'-phosphate</name>
        <dbReference type="ChEBI" id="CHEBI:597326"/>
    </ligand>
</feature>
<feature type="binding site" evidence="1">
    <location>
        <position position="143"/>
    </location>
    <ligand>
        <name>substrate</name>
    </ligand>
</feature>
<feature type="binding site" evidence="1">
    <location>
        <position position="189"/>
    </location>
    <ligand>
        <name>pyridoxal 5'-phosphate</name>
        <dbReference type="ChEBI" id="CHEBI:597326"/>
    </ligand>
</feature>
<feature type="binding site" evidence="1">
    <location>
        <position position="217"/>
    </location>
    <ligand>
        <name>pyridoxal 5'-phosphate</name>
        <dbReference type="ChEBI" id="CHEBI:597326"/>
    </ligand>
</feature>
<feature type="binding site" evidence="1">
    <location>
        <position position="245"/>
    </location>
    <ligand>
        <name>pyridoxal 5'-phosphate</name>
        <dbReference type="ChEBI" id="CHEBI:597326"/>
    </ligand>
</feature>
<feature type="binding site" evidence="1">
    <location>
        <position position="362"/>
    </location>
    <ligand>
        <name>substrate</name>
    </ligand>
</feature>
<feature type="modified residue" description="N6-(pyridoxal phosphate)lysine" evidence="1">
    <location>
        <position position="248"/>
    </location>
</feature>
<gene>
    <name evidence="1" type="primary">bioF</name>
    <name type="ordered locus">Mfla_2163</name>
</gene>
<evidence type="ECO:0000255" key="1">
    <source>
        <dbReference type="HAMAP-Rule" id="MF_01693"/>
    </source>
</evidence>
<evidence type="ECO:0000305" key="2"/>
<dbReference type="EC" id="2.3.1.47" evidence="1"/>
<dbReference type="EMBL" id="CP000284">
    <property type="protein sequence ID" value="ABE50430.1"/>
    <property type="status" value="ALT_INIT"/>
    <property type="molecule type" value="Genomic_DNA"/>
</dbReference>
<dbReference type="SMR" id="Q1GZA7"/>
<dbReference type="STRING" id="265072.Mfla_2163"/>
<dbReference type="KEGG" id="mfa:Mfla_2163"/>
<dbReference type="eggNOG" id="COG0156">
    <property type="taxonomic scope" value="Bacteria"/>
</dbReference>
<dbReference type="HOGENOM" id="CLU_015846_11_0_4"/>
<dbReference type="OrthoDB" id="9807157at2"/>
<dbReference type="UniPathway" id="UPA00078"/>
<dbReference type="Proteomes" id="UP000002440">
    <property type="component" value="Chromosome"/>
</dbReference>
<dbReference type="GO" id="GO:0008710">
    <property type="term" value="F:8-amino-7-oxononanoate synthase activity"/>
    <property type="evidence" value="ECO:0007669"/>
    <property type="project" value="UniProtKB-UniRule"/>
</dbReference>
<dbReference type="GO" id="GO:0030170">
    <property type="term" value="F:pyridoxal phosphate binding"/>
    <property type="evidence" value="ECO:0007669"/>
    <property type="project" value="UniProtKB-UniRule"/>
</dbReference>
<dbReference type="GO" id="GO:0009102">
    <property type="term" value="P:biotin biosynthetic process"/>
    <property type="evidence" value="ECO:0007669"/>
    <property type="project" value="UniProtKB-UniRule"/>
</dbReference>
<dbReference type="Gene3D" id="3.90.1150.10">
    <property type="entry name" value="Aspartate Aminotransferase, domain 1"/>
    <property type="match status" value="1"/>
</dbReference>
<dbReference type="Gene3D" id="3.40.640.10">
    <property type="entry name" value="Type I PLP-dependent aspartate aminotransferase-like (Major domain)"/>
    <property type="match status" value="1"/>
</dbReference>
<dbReference type="HAMAP" id="MF_01693">
    <property type="entry name" value="BioF_aminotrans_2"/>
    <property type="match status" value="1"/>
</dbReference>
<dbReference type="InterPro" id="IPR004839">
    <property type="entry name" value="Aminotransferase_I/II_large"/>
</dbReference>
<dbReference type="InterPro" id="IPR050087">
    <property type="entry name" value="AON_synthase_class-II"/>
</dbReference>
<dbReference type="InterPro" id="IPR004723">
    <property type="entry name" value="AONS_Archaea/Proteobacteria"/>
</dbReference>
<dbReference type="InterPro" id="IPR022834">
    <property type="entry name" value="AONS_Proteobacteria"/>
</dbReference>
<dbReference type="InterPro" id="IPR015424">
    <property type="entry name" value="PyrdxlP-dep_Trfase"/>
</dbReference>
<dbReference type="InterPro" id="IPR015421">
    <property type="entry name" value="PyrdxlP-dep_Trfase_major"/>
</dbReference>
<dbReference type="InterPro" id="IPR015422">
    <property type="entry name" value="PyrdxlP-dep_Trfase_small"/>
</dbReference>
<dbReference type="NCBIfam" id="TIGR00858">
    <property type="entry name" value="bioF"/>
    <property type="match status" value="1"/>
</dbReference>
<dbReference type="PANTHER" id="PTHR13693:SF100">
    <property type="entry name" value="8-AMINO-7-OXONONANOATE SYNTHASE"/>
    <property type="match status" value="1"/>
</dbReference>
<dbReference type="PANTHER" id="PTHR13693">
    <property type="entry name" value="CLASS II AMINOTRANSFERASE/8-AMINO-7-OXONONANOATE SYNTHASE"/>
    <property type="match status" value="1"/>
</dbReference>
<dbReference type="Pfam" id="PF00155">
    <property type="entry name" value="Aminotran_1_2"/>
    <property type="match status" value="1"/>
</dbReference>
<dbReference type="SUPFAM" id="SSF53383">
    <property type="entry name" value="PLP-dependent transferases"/>
    <property type="match status" value="1"/>
</dbReference>
<comment type="function">
    <text evidence="1">Catalyzes the decarboxylative condensation of pimeloyl-[acyl-carrier protein] and L-alanine to produce 8-amino-7-oxononanoate (AON), [acyl-carrier protein], and carbon dioxide.</text>
</comment>
<comment type="catalytic activity">
    <reaction evidence="1">
        <text>6-carboxyhexanoyl-[ACP] + L-alanine + H(+) = (8S)-8-amino-7-oxononanoate + holo-[ACP] + CO2</text>
        <dbReference type="Rhea" id="RHEA:42288"/>
        <dbReference type="Rhea" id="RHEA-COMP:9685"/>
        <dbReference type="Rhea" id="RHEA-COMP:9955"/>
        <dbReference type="ChEBI" id="CHEBI:15378"/>
        <dbReference type="ChEBI" id="CHEBI:16526"/>
        <dbReference type="ChEBI" id="CHEBI:57972"/>
        <dbReference type="ChEBI" id="CHEBI:64479"/>
        <dbReference type="ChEBI" id="CHEBI:78846"/>
        <dbReference type="ChEBI" id="CHEBI:149468"/>
        <dbReference type="EC" id="2.3.1.47"/>
    </reaction>
</comment>
<comment type="cofactor">
    <cofactor evidence="1">
        <name>pyridoxal 5'-phosphate</name>
        <dbReference type="ChEBI" id="CHEBI:597326"/>
    </cofactor>
</comment>
<comment type="pathway">
    <text evidence="1">Cofactor biosynthesis; biotin biosynthesis.</text>
</comment>
<comment type="subunit">
    <text evidence="1">Homodimer.</text>
</comment>
<comment type="similarity">
    <text evidence="1">Belongs to the class-II pyridoxal-phosphate-dependent aminotransferase family. BioF subfamily.</text>
</comment>
<comment type="sequence caution" evidence="2">
    <conflict type="erroneous initiation">
        <sequence resource="EMBL-CDS" id="ABE50430"/>
    </conflict>
</comment>
<name>BIOF_METFK</name>
<reference key="1">
    <citation type="submission" date="2006-03" db="EMBL/GenBank/DDBJ databases">
        <title>Complete sequence of Methylobacillus flagellatus KT.</title>
        <authorList>
            <consortium name="US DOE Joint Genome Institute"/>
            <person name="Copeland A."/>
            <person name="Lucas S."/>
            <person name="Lapidus A."/>
            <person name="Barry K."/>
            <person name="Detter J.C."/>
            <person name="Glavina del Rio T."/>
            <person name="Hammon N."/>
            <person name="Israni S."/>
            <person name="Dalin E."/>
            <person name="Tice H."/>
            <person name="Pitluck S."/>
            <person name="Brettin T."/>
            <person name="Bruce D."/>
            <person name="Han C."/>
            <person name="Tapia R."/>
            <person name="Saunders E."/>
            <person name="Gilna P."/>
            <person name="Schmutz J."/>
            <person name="Larimer F."/>
            <person name="Land M."/>
            <person name="Kyrpides N."/>
            <person name="Anderson I."/>
            <person name="Richardson P."/>
        </authorList>
    </citation>
    <scope>NUCLEOTIDE SEQUENCE [LARGE SCALE GENOMIC DNA]</scope>
    <source>
        <strain>ATCC 51484 / DSM 6875 / VKM B-1610 / KT</strain>
    </source>
</reference>
<protein>
    <recommendedName>
        <fullName evidence="1">8-amino-7-oxononanoate synthase</fullName>
        <shortName evidence="1">AONS</shortName>
        <ecNumber evidence="1">2.3.1.47</ecNumber>
    </recommendedName>
    <alternativeName>
        <fullName evidence="1">7-keto-8-amino-pelargonic acid synthase</fullName>
        <shortName evidence="1">7-KAP synthase</shortName>
        <shortName evidence="1">KAPA synthase</shortName>
    </alternativeName>
    <alternativeName>
        <fullName evidence="1">8-amino-7-ketopelargonate synthase</fullName>
    </alternativeName>
</protein>
<keyword id="KW-0093">Biotin biosynthesis</keyword>
<keyword id="KW-0663">Pyridoxal phosphate</keyword>
<keyword id="KW-1185">Reference proteome</keyword>
<keyword id="KW-0808">Transferase</keyword>